<sequence length="211" mass="23065">MPVIAVVDYEMGNLHSVCKGLEKAGATPNVTYSPKELEQADAIVLPGVGAFDPAVQHLRARGLEQPIKDAIASGKPFLGICLGLQILFESSAEGTQPGLGIIKGKVRRFRPEPDITIPHMGWNQLEMTQAKSILWEHLPSDPWVYFVHSYYVDPIDPLIRAATITHGTQTVTAAIAHENLMAVQFHPEKSSNIGLQILSNFVAQVREKIPA</sequence>
<organism>
    <name type="scientific">Nostoc punctiforme (strain ATCC 29133 / PCC 73102)</name>
    <dbReference type="NCBI Taxonomy" id="63737"/>
    <lineage>
        <taxon>Bacteria</taxon>
        <taxon>Bacillati</taxon>
        <taxon>Cyanobacteriota</taxon>
        <taxon>Cyanophyceae</taxon>
        <taxon>Nostocales</taxon>
        <taxon>Nostocaceae</taxon>
        <taxon>Nostoc</taxon>
    </lineage>
</organism>
<evidence type="ECO:0000255" key="1">
    <source>
        <dbReference type="HAMAP-Rule" id="MF_00278"/>
    </source>
</evidence>
<proteinExistence type="inferred from homology"/>
<feature type="chain" id="PRO_1000114786" description="Imidazole glycerol phosphate synthase subunit HisH">
    <location>
        <begin position="1"/>
        <end position="211"/>
    </location>
</feature>
<feature type="domain" description="Glutamine amidotransferase type-1" evidence="1">
    <location>
        <begin position="3"/>
        <end position="211"/>
    </location>
</feature>
<feature type="active site" description="Nucleophile" evidence="1">
    <location>
        <position position="81"/>
    </location>
</feature>
<feature type="active site" evidence="1">
    <location>
        <position position="186"/>
    </location>
</feature>
<feature type="active site" evidence="1">
    <location>
        <position position="188"/>
    </location>
</feature>
<gene>
    <name evidence="1" type="primary">hisH</name>
    <name type="ordered locus">Npun_F4990</name>
</gene>
<comment type="function">
    <text evidence="1">IGPS catalyzes the conversion of PRFAR and glutamine to IGP, AICAR and glutamate. The HisH subunit catalyzes the hydrolysis of glutamine to glutamate and ammonia as part of the synthesis of IGP and AICAR. The resulting ammonia molecule is channeled to the active site of HisF.</text>
</comment>
<comment type="catalytic activity">
    <reaction evidence="1">
        <text>5-[(5-phospho-1-deoxy-D-ribulos-1-ylimino)methylamino]-1-(5-phospho-beta-D-ribosyl)imidazole-4-carboxamide + L-glutamine = D-erythro-1-(imidazol-4-yl)glycerol 3-phosphate + 5-amino-1-(5-phospho-beta-D-ribosyl)imidazole-4-carboxamide + L-glutamate + H(+)</text>
        <dbReference type="Rhea" id="RHEA:24793"/>
        <dbReference type="ChEBI" id="CHEBI:15378"/>
        <dbReference type="ChEBI" id="CHEBI:29985"/>
        <dbReference type="ChEBI" id="CHEBI:58278"/>
        <dbReference type="ChEBI" id="CHEBI:58359"/>
        <dbReference type="ChEBI" id="CHEBI:58475"/>
        <dbReference type="ChEBI" id="CHEBI:58525"/>
        <dbReference type="EC" id="4.3.2.10"/>
    </reaction>
</comment>
<comment type="catalytic activity">
    <reaction evidence="1">
        <text>L-glutamine + H2O = L-glutamate + NH4(+)</text>
        <dbReference type="Rhea" id="RHEA:15889"/>
        <dbReference type="ChEBI" id="CHEBI:15377"/>
        <dbReference type="ChEBI" id="CHEBI:28938"/>
        <dbReference type="ChEBI" id="CHEBI:29985"/>
        <dbReference type="ChEBI" id="CHEBI:58359"/>
        <dbReference type="EC" id="3.5.1.2"/>
    </reaction>
</comment>
<comment type="pathway">
    <text evidence="1">Amino-acid biosynthesis; L-histidine biosynthesis; L-histidine from 5-phospho-alpha-D-ribose 1-diphosphate: step 5/9.</text>
</comment>
<comment type="subunit">
    <text evidence="1">Heterodimer of HisH and HisF.</text>
</comment>
<comment type="subcellular location">
    <subcellularLocation>
        <location evidence="1">Cytoplasm</location>
    </subcellularLocation>
</comment>
<keyword id="KW-0028">Amino-acid biosynthesis</keyword>
<keyword id="KW-0963">Cytoplasm</keyword>
<keyword id="KW-0315">Glutamine amidotransferase</keyword>
<keyword id="KW-0368">Histidine biosynthesis</keyword>
<keyword id="KW-0378">Hydrolase</keyword>
<keyword id="KW-0456">Lyase</keyword>
<keyword id="KW-1185">Reference proteome</keyword>
<protein>
    <recommendedName>
        <fullName evidence="1">Imidazole glycerol phosphate synthase subunit HisH</fullName>
        <ecNumber evidence="1">4.3.2.10</ecNumber>
    </recommendedName>
    <alternativeName>
        <fullName evidence="1">IGP synthase glutaminase subunit</fullName>
        <ecNumber evidence="1">3.5.1.2</ecNumber>
    </alternativeName>
    <alternativeName>
        <fullName evidence="1">IGP synthase subunit HisH</fullName>
    </alternativeName>
    <alternativeName>
        <fullName evidence="1">ImGP synthase subunit HisH</fullName>
        <shortName evidence="1">IGPS subunit HisH</shortName>
    </alternativeName>
</protein>
<reference key="1">
    <citation type="journal article" date="2013" name="Plant Physiol.">
        <title>A Nostoc punctiforme Sugar Transporter Necessary to Establish a Cyanobacterium-Plant Symbiosis.</title>
        <authorList>
            <person name="Ekman M."/>
            <person name="Picossi S."/>
            <person name="Campbell E.L."/>
            <person name="Meeks J.C."/>
            <person name="Flores E."/>
        </authorList>
    </citation>
    <scope>NUCLEOTIDE SEQUENCE [LARGE SCALE GENOMIC DNA]</scope>
    <source>
        <strain>ATCC 29133 / PCC 73102</strain>
    </source>
</reference>
<name>HIS5_NOSP7</name>
<dbReference type="EC" id="4.3.2.10" evidence="1"/>
<dbReference type="EC" id="3.5.1.2" evidence="1"/>
<dbReference type="EMBL" id="CP001037">
    <property type="protein sequence ID" value="ACC83334.1"/>
    <property type="molecule type" value="Genomic_DNA"/>
</dbReference>
<dbReference type="RefSeq" id="WP_012411289.1">
    <property type="nucleotide sequence ID" value="NC_010628.1"/>
</dbReference>
<dbReference type="SMR" id="B2J1A3"/>
<dbReference type="STRING" id="63737.Npun_F4990"/>
<dbReference type="EnsemblBacteria" id="ACC83334">
    <property type="protein sequence ID" value="ACC83334"/>
    <property type="gene ID" value="Npun_F4990"/>
</dbReference>
<dbReference type="KEGG" id="npu:Npun_F4990"/>
<dbReference type="eggNOG" id="COG0118">
    <property type="taxonomic scope" value="Bacteria"/>
</dbReference>
<dbReference type="HOGENOM" id="CLU_071837_2_2_3"/>
<dbReference type="OrthoDB" id="9807137at2"/>
<dbReference type="PhylomeDB" id="B2J1A3"/>
<dbReference type="UniPathway" id="UPA00031">
    <property type="reaction ID" value="UER00010"/>
</dbReference>
<dbReference type="Proteomes" id="UP000001191">
    <property type="component" value="Chromosome"/>
</dbReference>
<dbReference type="GO" id="GO:0005737">
    <property type="term" value="C:cytoplasm"/>
    <property type="evidence" value="ECO:0007669"/>
    <property type="project" value="UniProtKB-SubCell"/>
</dbReference>
<dbReference type="GO" id="GO:0004359">
    <property type="term" value="F:glutaminase activity"/>
    <property type="evidence" value="ECO:0007669"/>
    <property type="project" value="UniProtKB-EC"/>
</dbReference>
<dbReference type="GO" id="GO:0000107">
    <property type="term" value="F:imidazoleglycerol-phosphate synthase activity"/>
    <property type="evidence" value="ECO:0007669"/>
    <property type="project" value="UniProtKB-UniRule"/>
</dbReference>
<dbReference type="GO" id="GO:0016829">
    <property type="term" value="F:lyase activity"/>
    <property type="evidence" value="ECO:0007669"/>
    <property type="project" value="UniProtKB-KW"/>
</dbReference>
<dbReference type="GO" id="GO:0000105">
    <property type="term" value="P:L-histidine biosynthetic process"/>
    <property type="evidence" value="ECO:0007669"/>
    <property type="project" value="UniProtKB-UniRule"/>
</dbReference>
<dbReference type="CDD" id="cd01748">
    <property type="entry name" value="GATase1_IGP_Synthase"/>
    <property type="match status" value="1"/>
</dbReference>
<dbReference type="FunFam" id="3.40.50.880:FF:000009">
    <property type="entry name" value="Imidazole glycerol phosphate synthase subunit HisH"/>
    <property type="match status" value="1"/>
</dbReference>
<dbReference type="Gene3D" id="3.40.50.880">
    <property type="match status" value="1"/>
</dbReference>
<dbReference type="HAMAP" id="MF_00278">
    <property type="entry name" value="HisH"/>
    <property type="match status" value="1"/>
</dbReference>
<dbReference type="InterPro" id="IPR029062">
    <property type="entry name" value="Class_I_gatase-like"/>
</dbReference>
<dbReference type="InterPro" id="IPR017926">
    <property type="entry name" value="GATASE"/>
</dbReference>
<dbReference type="InterPro" id="IPR010139">
    <property type="entry name" value="Imidazole-glycPsynth_HisH"/>
</dbReference>
<dbReference type="NCBIfam" id="TIGR01855">
    <property type="entry name" value="IMP_synth_hisH"/>
    <property type="match status" value="1"/>
</dbReference>
<dbReference type="PANTHER" id="PTHR42701">
    <property type="entry name" value="IMIDAZOLE GLYCEROL PHOSPHATE SYNTHASE SUBUNIT HISH"/>
    <property type="match status" value="1"/>
</dbReference>
<dbReference type="PANTHER" id="PTHR42701:SF1">
    <property type="entry name" value="IMIDAZOLE GLYCEROL PHOSPHATE SYNTHASE SUBUNIT HISH"/>
    <property type="match status" value="1"/>
</dbReference>
<dbReference type="Pfam" id="PF00117">
    <property type="entry name" value="GATase"/>
    <property type="match status" value="1"/>
</dbReference>
<dbReference type="PIRSF" id="PIRSF000495">
    <property type="entry name" value="Amidotransf_hisH"/>
    <property type="match status" value="1"/>
</dbReference>
<dbReference type="SUPFAM" id="SSF52317">
    <property type="entry name" value="Class I glutamine amidotransferase-like"/>
    <property type="match status" value="1"/>
</dbReference>
<dbReference type="PROSITE" id="PS51273">
    <property type="entry name" value="GATASE_TYPE_1"/>
    <property type="match status" value="1"/>
</dbReference>
<accession>B2J1A3</accession>